<evidence type="ECO:0000305" key="1"/>
<reference key="1">
    <citation type="journal article" date="2000" name="Nature">
        <title>Ancestral chloroplast genome in Mesostigma viride reveals an early branch of green plant evolution.</title>
        <authorList>
            <person name="Lemieux C."/>
            <person name="Otis C."/>
            <person name="Turmel M."/>
        </authorList>
    </citation>
    <scope>NUCLEOTIDE SEQUENCE [LARGE SCALE GENOMIC DNA]</scope>
    <source>
        <strain>NIES-296 / KY-14 / CCMP 2046</strain>
    </source>
</reference>
<organism>
    <name type="scientific">Mesostigma viride</name>
    <name type="common">Green alga</name>
    <dbReference type="NCBI Taxonomy" id="41882"/>
    <lineage>
        <taxon>Eukaryota</taxon>
        <taxon>Viridiplantae</taxon>
        <taxon>Streptophyta</taxon>
        <taxon>Mesostigmatophyceae</taxon>
        <taxon>Mesostigmatales</taxon>
        <taxon>Mesostigmataceae</taxon>
        <taxon>Mesostigma</taxon>
    </lineage>
</organism>
<name>RR9_MESVI</name>
<accession>Q9MUV1</accession>
<keyword id="KW-0150">Chloroplast</keyword>
<keyword id="KW-0934">Plastid</keyword>
<keyword id="KW-0687">Ribonucleoprotein</keyword>
<keyword id="KW-0689">Ribosomal protein</keyword>
<gene>
    <name type="primary">rps9</name>
</gene>
<comment type="subcellular location">
    <subcellularLocation>
        <location>Plastid</location>
        <location>Chloroplast</location>
    </subcellularLocation>
</comment>
<comment type="similarity">
    <text evidence="1">Belongs to the universal ribosomal protein uS9 family.</text>
</comment>
<sequence>MSVQKMMPIINYLGTGRRKSAVARVRLVPGNGEVIINGLPGTNYLQFNGSYLSAVRSPLETLGLEDNYDIIVKAVGGGLTGQAEAIRLGVARALCTIDTSNRHPLKKEGFLTRDSRVKERKKYGLKKARKAPQFSKR</sequence>
<geneLocation type="chloroplast"/>
<dbReference type="EMBL" id="AF166114">
    <property type="protein sequence ID" value="AAF43800.1"/>
    <property type="molecule type" value="Genomic_DNA"/>
</dbReference>
<dbReference type="RefSeq" id="NP_038359.1">
    <property type="nucleotide sequence ID" value="NC_002186.1"/>
</dbReference>
<dbReference type="SMR" id="Q9MUV1"/>
<dbReference type="GeneID" id="800910"/>
<dbReference type="GO" id="GO:0009507">
    <property type="term" value="C:chloroplast"/>
    <property type="evidence" value="ECO:0007669"/>
    <property type="project" value="UniProtKB-SubCell"/>
</dbReference>
<dbReference type="GO" id="GO:0022627">
    <property type="term" value="C:cytosolic small ribosomal subunit"/>
    <property type="evidence" value="ECO:0007669"/>
    <property type="project" value="TreeGrafter"/>
</dbReference>
<dbReference type="GO" id="GO:0003723">
    <property type="term" value="F:RNA binding"/>
    <property type="evidence" value="ECO:0007669"/>
    <property type="project" value="TreeGrafter"/>
</dbReference>
<dbReference type="GO" id="GO:0003735">
    <property type="term" value="F:structural constituent of ribosome"/>
    <property type="evidence" value="ECO:0007669"/>
    <property type="project" value="InterPro"/>
</dbReference>
<dbReference type="GO" id="GO:0006412">
    <property type="term" value="P:translation"/>
    <property type="evidence" value="ECO:0007669"/>
    <property type="project" value="UniProtKB-UniRule"/>
</dbReference>
<dbReference type="FunFam" id="3.30.230.10:FF:000001">
    <property type="entry name" value="30S ribosomal protein S9"/>
    <property type="match status" value="1"/>
</dbReference>
<dbReference type="Gene3D" id="3.30.230.10">
    <property type="match status" value="1"/>
</dbReference>
<dbReference type="HAMAP" id="MF_00532_B">
    <property type="entry name" value="Ribosomal_uS9_B"/>
    <property type="match status" value="1"/>
</dbReference>
<dbReference type="InterPro" id="IPR020568">
    <property type="entry name" value="Ribosomal_Su5_D2-typ_SF"/>
</dbReference>
<dbReference type="InterPro" id="IPR000754">
    <property type="entry name" value="Ribosomal_uS9"/>
</dbReference>
<dbReference type="InterPro" id="IPR023035">
    <property type="entry name" value="Ribosomal_uS9_bac/plastid"/>
</dbReference>
<dbReference type="InterPro" id="IPR020574">
    <property type="entry name" value="Ribosomal_uS9_CS"/>
</dbReference>
<dbReference type="InterPro" id="IPR014721">
    <property type="entry name" value="Ribsml_uS5_D2-typ_fold_subgr"/>
</dbReference>
<dbReference type="NCBIfam" id="NF001099">
    <property type="entry name" value="PRK00132.1"/>
    <property type="match status" value="1"/>
</dbReference>
<dbReference type="PANTHER" id="PTHR21569">
    <property type="entry name" value="RIBOSOMAL PROTEIN S9"/>
    <property type="match status" value="1"/>
</dbReference>
<dbReference type="PANTHER" id="PTHR21569:SF1">
    <property type="entry name" value="SMALL RIBOSOMAL SUBUNIT PROTEIN US9M"/>
    <property type="match status" value="1"/>
</dbReference>
<dbReference type="Pfam" id="PF00380">
    <property type="entry name" value="Ribosomal_S9"/>
    <property type="match status" value="1"/>
</dbReference>
<dbReference type="SUPFAM" id="SSF54211">
    <property type="entry name" value="Ribosomal protein S5 domain 2-like"/>
    <property type="match status" value="1"/>
</dbReference>
<dbReference type="PROSITE" id="PS00360">
    <property type="entry name" value="RIBOSOMAL_S9"/>
    <property type="match status" value="1"/>
</dbReference>
<feature type="chain" id="PRO_0000111456" description="Small ribosomal subunit protein uS9c">
    <location>
        <begin position="1"/>
        <end position="137"/>
    </location>
</feature>
<protein>
    <recommendedName>
        <fullName evidence="1">Small ribosomal subunit protein uS9c</fullName>
    </recommendedName>
    <alternativeName>
        <fullName>30S ribosomal protein S9, chloroplastic</fullName>
    </alternativeName>
</protein>
<proteinExistence type="inferred from homology"/>